<feature type="chain" id="PRO_0000418763" description="Lysine 6-dehydrogenase">
    <location>
        <begin position="1"/>
        <end position="385"/>
    </location>
</feature>
<accession>Q9AJC6</accession>
<comment type="function">
    <text evidence="1">Catalyzes the oxidative deamination of L-lysine in the presence of NAD. Can also use (S)-(2-aminoethyl)-L-cysteine as a substrate, but more slowly. Can use both NAD and NADP but the preferred substrate is NAD.</text>
</comment>
<comment type="catalytic activity">
    <reaction evidence="1">
        <text>L-lysine + NAD(+) = L-1-piperideine-6-carboxylate + NH4(+) + NADH + 2 H(+)</text>
        <dbReference type="Rhea" id="RHEA:12408"/>
        <dbReference type="ChEBI" id="CHEBI:15378"/>
        <dbReference type="ChEBI" id="CHEBI:28938"/>
        <dbReference type="ChEBI" id="CHEBI:32551"/>
        <dbReference type="ChEBI" id="CHEBI:57540"/>
        <dbReference type="ChEBI" id="CHEBI:57945"/>
        <dbReference type="ChEBI" id="CHEBI:58769"/>
        <dbReference type="EC" id="1.4.1.18"/>
    </reaction>
</comment>
<comment type="biophysicochemical properties">
    <kinetics>
        <KM evidence="1">0.73 mM for L-lysine</KM>
        <KM evidence="1">0.088 mM for NAD(+)</KM>
        <KM evidence="1">0.48 mM for NADP(+)</KM>
    </kinetics>
    <phDependence>
        <text evidence="1">Optimum pH is 10.1.</text>
    </phDependence>
    <temperatureDependence>
        <text evidence="1">Optimum temperature is 70.0 degrees Celsius.</text>
    </temperatureDependence>
</comment>
<comment type="subunit">
    <text evidence="1">Homohexamer.</text>
</comment>
<comment type="similarity">
    <text evidence="2">Belongs to the saccharopine dehydrogenase family.</text>
</comment>
<sequence length="385" mass="42240">MKVLVLGAGLMGKEAARDLVQSQDVEAVTLADVDLAKAEQTVRQLHSKKLAAVRVDAGDPQQLAAAMKGHDVVVNALFYQFNETVAKTAIETGVHSVDLGGHIGHITDRVLELHERAQAAGVTIIPDLGVAPGMINILSGYGASQLDEVESILLYVGGIPVRPEPPLEYNHVFSLEGLLDHYTDPALIIRNGQKQEVPSLSEVEPIYFDRFGPLEAFHTSGGTSTLSRSFPNLKRLEYKTIRYRGHAEKCKLLVDLTLTRHDVEVEINGCRVKPRDVLLSVLKPLLDLKGKDDVVLLRVIVGGRKDGKETVLEYETVTFNDRENKVTAMARTTAYTISAVAQLIGRGVITKRGVYPPEQIVPGDVYMDEMKKRGVLISEKRTVHS</sequence>
<proteinExistence type="evidence at protein level"/>
<name>LYSDH_GEOSE</name>
<dbReference type="EC" id="1.4.1.18"/>
<dbReference type="EMBL" id="AB052732">
    <property type="protein sequence ID" value="BAB39707.1"/>
    <property type="molecule type" value="Genomic_DNA"/>
</dbReference>
<dbReference type="SMR" id="Q9AJC6"/>
<dbReference type="KEGG" id="ag:BAB39707"/>
<dbReference type="BioCyc" id="MetaCyc:MONOMER-12440"/>
<dbReference type="BRENDA" id="1.4.1.18">
    <property type="organism ID" value="623"/>
</dbReference>
<dbReference type="GO" id="GO:0050303">
    <property type="term" value="F:lysine 6-dehydrogenase activity"/>
    <property type="evidence" value="ECO:0000314"/>
    <property type="project" value="UniProtKB"/>
</dbReference>
<dbReference type="GO" id="GO:0051260">
    <property type="term" value="P:protein homooligomerization"/>
    <property type="evidence" value="ECO:0000314"/>
    <property type="project" value="UniProtKB"/>
</dbReference>
<dbReference type="Gene3D" id="3.30.360.10">
    <property type="entry name" value="Dihydrodipicolinate Reductase, domain 2"/>
    <property type="match status" value="1"/>
</dbReference>
<dbReference type="Gene3D" id="3.40.50.720">
    <property type="entry name" value="NAD(P)-binding Rossmann-like Domain"/>
    <property type="match status" value="2"/>
</dbReference>
<dbReference type="InterPro" id="IPR051168">
    <property type="entry name" value="AASS"/>
</dbReference>
<dbReference type="InterPro" id="IPR036291">
    <property type="entry name" value="NAD(P)-bd_dom_sf"/>
</dbReference>
<dbReference type="InterPro" id="IPR032095">
    <property type="entry name" value="Sacchrp_dh-like_C"/>
</dbReference>
<dbReference type="InterPro" id="IPR005097">
    <property type="entry name" value="Sacchrp_dh_NADP-bd"/>
</dbReference>
<dbReference type="PANTHER" id="PTHR11133:SF22">
    <property type="entry name" value="ALPHA-AMINOADIPIC SEMIALDEHYDE SYNTHASE, MITOCHONDRIAL"/>
    <property type="match status" value="1"/>
</dbReference>
<dbReference type="PANTHER" id="PTHR11133">
    <property type="entry name" value="SACCHAROPINE DEHYDROGENASE"/>
    <property type="match status" value="1"/>
</dbReference>
<dbReference type="Pfam" id="PF16653">
    <property type="entry name" value="Sacchrp_dh_C"/>
    <property type="match status" value="1"/>
</dbReference>
<dbReference type="Pfam" id="PF03435">
    <property type="entry name" value="Sacchrp_dh_NADP"/>
    <property type="match status" value="1"/>
</dbReference>
<dbReference type="SUPFAM" id="SSF55347">
    <property type="entry name" value="Glyceraldehyde-3-phosphate dehydrogenase-like, C-terminal domain"/>
    <property type="match status" value="1"/>
</dbReference>
<dbReference type="SUPFAM" id="SSF51735">
    <property type="entry name" value="NAD(P)-binding Rossmann-fold domains"/>
    <property type="match status" value="1"/>
</dbReference>
<keyword id="KW-0903">Direct protein sequencing</keyword>
<keyword id="KW-0520">NAD</keyword>
<keyword id="KW-0560">Oxidoreductase</keyword>
<protein>
    <recommendedName>
        <fullName>Lysine 6-dehydrogenase</fullName>
        <ecNumber>1.4.1.18</ecNumber>
    </recommendedName>
    <alternativeName>
        <fullName>L-lysine 6-dehydrogenase</fullName>
    </alternativeName>
    <alternativeName>
        <fullName>L-lysine epsilon-dehydrogenase</fullName>
    </alternativeName>
</protein>
<evidence type="ECO:0000269" key="1">
    <source>
    </source>
</evidence>
<evidence type="ECO:0000305" key="2"/>
<gene>
    <name type="primary">lysDH</name>
</gene>
<reference key="1">
    <citation type="journal article" date="2004" name="Appl. Environ. Microbiol.">
        <title>Highly stable L-lysine 6-dehydrogenase from the thermophile Geobacillus stearothermophilus isolated from a Japanese hot spring: characterization, gene cloning and sequencing, and expression.</title>
        <authorList>
            <person name="Heydari M."/>
            <person name="Ohshima T."/>
            <person name="Nunoura-Kominato N."/>
            <person name="Sakuraba H."/>
        </authorList>
    </citation>
    <scope>NUCLEOTIDE SEQUENCE [GENOMIC DNA]</scope>
    <scope>PROTEIN SEQUENCE OF 1-25</scope>
    <scope>FUNCTION</scope>
    <scope>SUBUNIT</scope>
    <scope>CATALYTIC ACTIVITY</scope>
    <scope>BIOPHYSICOCHEMICAL PROPERTIES</scope>
    <source>
        <strain>UTB 1103</strain>
    </source>
</reference>
<organism>
    <name type="scientific">Geobacillus stearothermophilus</name>
    <name type="common">Bacillus stearothermophilus</name>
    <dbReference type="NCBI Taxonomy" id="1422"/>
    <lineage>
        <taxon>Bacteria</taxon>
        <taxon>Bacillati</taxon>
        <taxon>Bacillota</taxon>
        <taxon>Bacilli</taxon>
        <taxon>Bacillales</taxon>
        <taxon>Anoxybacillaceae</taxon>
        <taxon>Geobacillus</taxon>
    </lineage>
</organism>